<comment type="function">
    <text evidence="2">Ubiquitin thioesterase, which specifically hydrolyzes 'Lys-29'-linked and 'Lys-33'-linked diubiquitin (By similarity). Also cleaves 'Lys-63'-linked chains, but with 40-fold less efficiency compared to 'Lys-29'-linked ones (By similarity). Positive regulator of the Wnt signaling pathway that deubiquitinates APC protein, a negative regulator of Wnt-mediated transcription (By similarity). Acts as a regulator of autophagy by mediating deubiquitination of PIK3C3/VPS34, thereby promoting autophagosome maturation (By similarity). Plays a role in the regulation of cell morphology and cytoskeletal organization (By similarity). Required in the stress fiber dynamics and cell migration (By similarity).</text>
</comment>
<comment type="catalytic activity">
    <reaction evidence="2">
        <text>Thiol-dependent hydrolysis of ester, thioester, amide, peptide and isopeptide bonds formed by the C-terminal Gly of ubiquitin (a 76-residue protein attached to proteins as an intracellular targeting signal).</text>
        <dbReference type="EC" id="3.4.19.12"/>
    </reaction>
</comment>
<comment type="subunit">
    <text evidence="2">Interacts with TRAF6. Interacts with APC.</text>
</comment>
<comment type="subcellular location">
    <subcellularLocation>
        <location evidence="2">Cytoplasm</location>
    </subcellularLocation>
    <subcellularLocation>
        <location evidence="2">Nucleus</location>
    </subcellularLocation>
    <text evidence="2">Enriched in punctate localization in the cytoplasm.</text>
</comment>
<comment type="domain">
    <text evidence="2">The RanBP2-type zinc fingers, also called NZFs, mediate the interaction with ubiquitin and determine linkage specificity. RanBP2-type zinc fingers 1 and 2 (also named NZF1 and NZF2) specifically recognize and bind 'Lys-29'- and 'Lys-33'-linked ubiquitin. RanBP2-type zinc finger 3 (also named NZF3) binds 'Lys-33'-linked ubiquitin and shows weak binding to 'Lys-6'-, 'Lys-48'- and 'Lys-63'-linked ubiquitin chains but it does not interact with 'Lys-29'-linked chains.</text>
</comment>
<comment type="domain">
    <text evidence="2">The OTU domain mediates the deubiquitinating activity.</text>
</comment>
<comment type="domain">
    <text evidence="2">The second ankyrin repeat ANK 2 is termed AnkUBD, it interacts with ubiquitin hydrophobic patch and contributes to linkage specificity.</text>
</comment>
<comment type="similarity">
    <text evidence="7">Belongs to the peptidase C64 family.</text>
</comment>
<gene>
    <name evidence="2" type="primary">ZRANB1</name>
</gene>
<feature type="chain" id="PRO_0000361553" description="Ubiquitin thioesterase ZRANB1">
    <location>
        <begin position="1"/>
        <end position="708"/>
    </location>
</feature>
<feature type="repeat" description="ANK 1">
    <location>
        <begin position="260"/>
        <end position="290"/>
    </location>
</feature>
<feature type="repeat" description="ANK 2">
    <location>
        <begin position="313"/>
        <end position="340"/>
    </location>
</feature>
<feature type="domain" description="OTU" evidence="3">
    <location>
        <begin position="432"/>
        <end position="592"/>
    </location>
</feature>
<feature type="zinc finger region" description="RanBP2-type 1" evidence="4">
    <location>
        <begin position="3"/>
        <end position="33"/>
    </location>
</feature>
<feature type="zinc finger region" description="RanBP2-type 2" evidence="4">
    <location>
        <begin position="84"/>
        <end position="113"/>
    </location>
</feature>
<feature type="zinc finger region" description="RanBP2-type 3" evidence="4">
    <location>
        <begin position="149"/>
        <end position="178"/>
    </location>
</feature>
<feature type="region of interest" description="Disordered" evidence="5">
    <location>
        <begin position="38"/>
        <end position="73"/>
    </location>
</feature>
<feature type="region of interest" description="Disordered" evidence="5">
    <location>
        <begin position="200"/>
        <end position="223"/>
    </location>
</feature>
<feature type="compositionally biased region" description="Polar residues" evidence="5">
    <location>
        <begin position="206"/>
        <end position="216"/>
    </location>
</feature>
<feature type="active site" description="Nucleophile" evidence="2">
    <location>
        <position position="443"/>
    </location>
</feature>
<feature type="active site" description="Proton acceptor" evidence="1">
    <location>
        <position position="585"/>
    </location>
</feature>
<feature type="binding site" evidence="4 6 8">
    <location>
        <position position="10"/>
    </location>
    <ligand>
        <name>Zn(2+)</name>
        <dbReference type="ChEBI" id="CHEBI:29105"/>
        <label>1</label>
    </ligand>
</feature>
<feature type="binding site" evidence="4 6 8">
    <location>
        <position position="13"/>
    </location>
    <ligand>
        <name>Zn(2+)</name>
        <dbReference type="ChEBI" id="CHEBI:29105"/>
        <label>1</label>
    </ligand>
</feature>
<feature type="binding site" evidence="4 6 8">
    <location>
        <position position="24"/>
    </location>
    <ligand>
        <name>Zn(2+)</name>
        <dbReference type="ChEBI" id="CHEBI:29105"/>
        <label>1</label>
    </ligand>
</feature>
<feature type="binding site" evidence="4 6 8">
    <location>
        <position position="27"/>
    </location>
    <ligand>
        <name>Zn(2+)</name>
        <dbReference type="ChEBI" id="CHEBI:29105"/>
        <label>1</label>
    </ligand>
</feature>
<feature type="binding site" evidence="4">
    <location>
        <position position="90"/>
    </location>
    <ligand>
        <name>Zn(2+)</name>
        <dbReference type="ChEBI" id="CHEBI:29105"/>
        <label>2</label>
    </ligand>
</feature>
<feature type="binding site" evidence="4">
    <location>
        <position position="93"/>
    </location>
    <ligand>
        <name>Zn(2+)</name>
        <dbReference type="ChEBI" id="CHEBI:29105"/>
        <label>2</label>
    </ligand>
</feature>
<feature type="binding site" evidence="4">
    <location>
        <position position="104"/>
    </location>
    <ligand>
        <name>Zn(2+)</name>
        <dbReference type="ChEBI" id="CHEBI:29105"/>
        <label>2</label>
    </ligand>
</feature>
<feature type="binding site" evidence="4">
    <location>
        <position position="107"/>
    </location>
    <ligand>
        <name>Zn(2+)</name>
        <dbReference type="ChEBI" id="CHEBI:29105"/>
        <label>2</label>
    </ligand>
</feature>
<feature type="binding site" evidence="4">
    <location>
        <position position="155"/>
    </location>
    <ligand>
        <name>Zn(2+)</name>
        <dbReference type="ChEBI" id="CHEBI:29105"/>
        <label>3</label>
    </ligand>
</feature>
<feature type="binding site" evidence="4">
    <location>
        <position position="158"/>
    </location>
    <ligand>
        <name>Zn(2+)</name>
        <dbReference type="ChEBI" id="CHEBI:29105"/>
        <label>3</label>
    </ligand>
</feature>
<feature type="binding site" evidence="4">
    <location>
        <position position="169"/>
    </location>
    <ligand>
        <name>Zn(2+)</name>
        <dbReference type="ChEBI" id="CHEBI:29105"/>
        <label>3</label>
    </ligand>
</feature>
<feature type="binding site" evidence="4">
    <location>
        <position position="172"/>
    </location>
    <ligand>
        <name>Zn(2+)</name>
        <dbReference type="ChEBI" id="CHEBI:29105"/>
        <label>3</label>
    </ligand>
</feature>
<feature type="strand" evidence="9">
    <location>
        <begin position="11"/>
        <end position="13"/>
    </location>
</feature>
<feature type="strand" evidence="9">
    <location>
        <begin position="15"/>
        <end position="17"/>
    </location>
</feature>
<feature type="strand" evidence="9">
    <location>
        <begin position="25"/>
        <end position="27"/>
    </location>
</feature>
<dbReference type="EC" id="3.4.19.12" evidence="2"/>
<dbReference type="EMBL" id="BC149099">
    <property type="protein sequence ID" value="AAI49100.1"/>
    <property type="molecule type" value="mRNA"/>
</dbReference>
<dbReference type="RefSeq" id="NP_001094584.1">
    <property type="nucleotide sequence ID" value="NM_001101114.1"/>
</dbReference>
<dbReference type="RefSeq" id="XP_024841406.1">
    <property type="nucleotide sequence ID" value="XM_024985638.2"/>
</dbReference>
<dbReference type="PDB" id="4S1Z">
    <property type="method" value="X-ray"/>
    <property type="resolution" value="3.03 A"/>
    <property type="chains" value="F/G/H/I/J=2-33"/>
</dbReference>
<dbReference type="PDBsum" id="4S1Z"/>
<dbReference type="SMR" id="A6QP16"/>
<dbReference type="FunCoup" id="A6QP16">
    <property type="interactions" value="1741"/>
</dbReference>
<dbReference type="STRING" id="9913.ENSBTAP00000004401"/>
<dbReference type="MEROPS" id="C64.004"/>
<dbReference type="PaxDb" id="9913-ENSBTAP00000004401"/>
<dbReference type="GeneID" id="523338"/>
<dbReference type="KEGG" id="bta:523338"/>
<dbReference type="CTD" id="54764"/>
<dbReference type="VEuPathDB" id="HostDB:ENSBTAG00000003395"/>
<dbReference type="eggNOG" id="KOG4345">
    <property type="taxonomic scope" value="Eukaryota"/>
</dbReference>
<dbReference type="HOGENOM" id="CLU_013907_0_0_1"/>
<dbReference type="InParanoid" id="A6QP16"/>
<dbReference type="OrthoDB" id="6275030at2759"/>
<dbReference type="TreeFam" id="TF323312"/>
<dbReference type="Reactome" id="R-BTA-195253">
    <property type="pathway name" value="Degradation of beta-catenin by the destruction complex"/>
</dbReference>
<dbReference type="Reactome" id="R-BTA-5689896">
    <property type="pathway name" value="Ovarian tumor domain proteases"/>
</dbReference>
<dbReference type="EvolutionaryTrace" id="A6QP16"/>
<dbReference type="Proteomes" id="UP000009136">
    <property type="component" value="Chromosome 26"/>
</dbReference>
<dbReference type="Bgee" id="ENSBTAG00000003395">
    <property type="expression patterns" value="Expressed in spermatid and 103 other cell types or tissues"/>
</dbReference>
<dbReference type="GO" id="GO:0005737">
    <property type="term" value="C:cytoplasm"/>
    <property type="evidence" value="ECO:0000250"/>
    <property type="project" value="UniProtKB"/>
</dbReference>
<dbReference type="GO" id="GO:0005634">
    <property type="term" value="C:nucleus"/>
    <property type="evidence" value="ECO:0000250"/>
    <property type="project" value="UniProtKB"/>
</dbReference>
<dbReference type="GO" id="GO:0004843">
    <property type="term" value="F:cysteine-type deubiquitinase activity"/>
    <property type="evidence" value="ECO:0000250"/>
    <property type="project" value="UniProtKB"/>
</dbReference>
<dbReference type="GO" id="GO:0070530">
    <property type="term" value="F:K63-linked polyubiquitin modification-dependent protein binding"/>
    <property type="evidence" value="ECO:0000318"/>
    <property type="project" value="GO_Central"/>
</dbReference>
<dbReference type="GO" id="GO:0008270">
    <property type="term" value="F:zinc ion binding"/>
    <property type="evidence" value="ECO:0007669"/>
    <property type="project" value="UniProtKB-KW"/>
</dbReference>
<dbReference type="GO" id="GO:0016477">
    <property type="term" value="P:cell migration"/>
    <property type="evidence" value="ECO:0000250"/>
    <property type="project" value="UniProtKB"/>
</dbReference>
<dbReference type="GO" id="GO:0007010">
    <property type="term" value="P:cytoskeleton organization"/>
    <property type="evidence" value="ECO:0000250"/>
    <property type="project" value="UniProtKB"/>
</dbReference>
<dbReference type="GO" id="GO:0030177">
    <property type="term" value="P:positive regulation of Wnt signaling pathway"/>
    <property type="evidence" value="ECO:0000250"/>
    <property type="project" value="UniProtKB"/>
</dbReference>
<dbReference type="GO" id="GO:0071947">
    <property type="term" value="P:protein deubiquitination involved in ubiquitin-dependent protein catabolic process"/>
    <property type="evidence" value="ECO:0000318"/>
    <property type="project" value="GO_Central"/>
</dbReference>
<dbReference type="GO" id="GO:0035523">
    <property type="term" value="P:protein K29-linked deubiquitination"/>
    <property type="evidence" value="ECO:0000250"/>
    <property type="project" value="UniProtKB"/>
</dbReference>
<dbReference type="GO" id="GO:1990168">
    <property type="term" value="P:protein K33-linked deubiquitination"/>
    <property type="evidence" value="ECO:0000250"/>
    <property type="project" value="UniProtKB"/>
</dbReference>
<dbReference type="GO" id="GO:0070536">
    <property type="term" value="P:protein K63-linked deubiquitination"/>
    <property type="evidence" value="ECO:0000250"/>
    <property type="project" value="UniProtKB"/>
</dbReference>
<dbReference type="GO" id="GO:0022604">
    <property type="term" value="P:regulation of cell morphogenesis"/>
    <property type="evidence" value="ECO:0000250"/>
    <property type="project" value="UniProtKB"/>
</dbReference>
<dbReference type="GO" id="GO:0016055">
    <property type="term" value="P:Wnt signaling pathway"/>
    <property type="evidence" value="ECO:0007669"/>
    <property type="project" value="UniProtKB-KW"/>
</dbReference>
<dbReference type="CDD" id="cd22767">
    <property type="entry name" value="OTU_ZRANB1"/>
    <property type="match status" value="1"/>
</dbReference>
<dbReference type="FunFam" id="1.25.40.560:FF:000001">
    <property type="entry name" value="ubiquitin thioesterase ZRANB1 isoform X1"/>
    <property type="match status" value="1"/>
</dbReference>
<dbReference type="FunFam" id="4.10.1060.10:FF:000006">
    <property type="entry name" value="ubiquitin thioesterase ZRANB1 isoform X1"/>
    <property type="match status" value="1"/>
</dbReference>
<dbReference type="FunFam" id="4.10.1060.10:FF:000011">
    <property type="entry name" value="ubiquitin thioesterase ZRANB1 isoform X1"/>
    <property type="match status" value="1"/>
</dbReference>
<dbReference type="FunFam" id="4.10.1060.10:FF:000012">
    <property type="entry name" value="ubiquitin thioesterase ZRANB1 isoform X1"/>
    <property type="match status" value="1"/>
</dbReference>
<dbReference type="Gene3D" id="1.25.40.560">
    <property type="match status" value="1"/>
</dbReference>
<dbReference type="Gene3D" id="4.10.1060.10">
    <property type="entry name" value="Zinc finger, RanBP2-type"/>
    <property type="match status" value="3"/>
</dbReference>
<dbReference type="InterPro" id="IPR041294">
    <property type="entry name" value="AnkUBD"/>
</dbReference>
<dbReference type="InterPro" id="IPR051346">
    <property type="entry name" value="OTU_Deubiquitinase"/>
</dbReference>
<dbReference type="InterPro" id="IPR003323">
    <property type="entry name" value="OTU_dom"/>
</dbReference>
<dbReference type="InterPro" id="IPR001876">
    <property type="entry name" value="Znf_RanBP2"/>
</dbReference>
<dbReference type="InterPro" id="IPR036443">
    <property type="entry name" value="Znf_RanBP2_sf"/>
</dbReference>
<dbReference type="InterPro" id="IPR049768">
    <property type="entry name" value="ZRANB1_OTU"/>
</dbReference>
<dbReference type="PANTHER" id="PTHR13367">
    <property type="entry name" value="UBIQUITIN THIOESTERASE"/>
    <property type="match status" value="1"/>
</dbReference>
<dbReference type="PANTHER" id="PTHR13367:SF28">
    <property type="entry name" value="UBIQUITIN THIOESTERASE ZRANB1"/>
    <property type="match status" value="1"/>
</dbReference>
<dbReference type="Pfam" id="PF18418">
    <property type="entry name" value="AnkUBD"/>
    <property type="match status" value="1"/>
</dbReference>
<dbReference type="Pfam" id="PF02338">
    <property type="entry name" value="OTU"/>
    <property type="match status" value="1"/>
</dbReference>
<dbReference type="Pfam" id="PF00641">
    <property type="entry name" value="Zn_ribbon_RanBP"/>
    <property type="match status" value="2"/>
</dbReference>
<dbReference type="SMART" id="SM00547">
    <property type="entry name" value="ZnF_RBZ"/>
    <property type="match status" value="3"/>
</dbReference>
<dbReference type="SUPFAM" id="SSF90209">
    <property type="entry name" value="Ran binding protein zinc finger-like"/>
    <property type="match status" value="2"/>
</dbReference>
<dbReference type="PROSITE" id="PS50802">
    <property type="entry name" value="OTU"/>
    <property type="match status" value="1"/>
</dbReference>
<dbReference type="PROSITE" id="PS01358">
    <property type="entry name" value="ZF_RANBP2_1"/>
    <property type="match status" value="3"/>
</dbReference>
<dbReference type="PROSITE" id="PS50199">
    <property type="entry name" value="ZF_RANBP2_2"/>
    <property type="match status" value="3"/>
</dbReference>
<name>ZRAN1_BOVIN</name>
<sequence>MSERGIKWACEYCTYENWPSAIKCTMCRAQRPSGTIITEDPFKSGSSDVGRDWDPSSTEGGSSPLICPDSSARPRVKSSYSMENANKWSCHMCTYLNWPRAIRCTQCLSQRRTRSPTESPQSSGSGSRPVAFSVDPCEEYNDRNKLNTRTQHWTCSICTYENWAKAKKCVVCDHPRPNNIEAIEFAETEEASSIINEQDRARWRGSCSSGNSQRRSPPTMKRDSEVKMDFQRIELAGAVGSKEELEVDFKKLKQIKNRMKKTDWLFLNACVGVVEGDLAAIEAYKSSGGDIARQLTADEVRLLNRPSAFDVGYTLVHLAIRFQRQDMLAILLTEVSQQAAKCIPAMVCPELTEQIRREIAASLHQRKGDFACYFLTDLVTFTLPADIEDLPPTVQEKLFDEVLDRDVQKELEEESPIINWSLELATRLDSRLYALWNRTAGDCLLDSVLQATWGIYDKDSVLRKALHDSLHDCSHWFYTRWKDWESWYSQSFGLHFSLREEQWQEDWAFILSLASQPGASLEQTHIFVLAHILRRPIIVYGVKYYKSFRGETLGYTRFQGVYLPLLWEQSFCWKSPIALGYTRGHFSALVAMENDGYGNRGAGANLNTDDDVTITFLPLVDSERKLLHVHFLSAQELGNEEQQEKLLREWLDCCVTEGGVLVAMQKSSRRRNHPLVTQMVEKWLDRYRQIRPCTSLSDGEEDEDDEDE</sequence>
<protein>
    <recommendedName>
        <fullName evidence="7">Ubiquitin thioesterase ZRANB1</fullName>
        <ecNumber evidence="2">3.4.19.12</ecNumber>
    </recommendedName>
    <alternativeName>
        <fullName evidence="2">Zinc finger Ran-binding domain-containing protein 1</fullName>
    </alternativeName>
</protein>
<proteinExistence type="evidence at protein level"/>
<keyword id="KW-0002">3D-structure</keyword>
<keyword id="KW-0040">ANK repeat</keyword>
<keyword id="KW-0963">Cytoplasm</keyword>
<keyword id="KW-0378">Hydrolase</keyword>
<keyword id="KW-0479">Metal-binding</keyword>
<keyword id="KW-0539">Nucleus</keyword>
<keyword id="KW-0645">Protease</keyword>
<keyword id="KW-1185">Reference proteome</keyword>
<keyword id="KW-0677">Repeat</keyword>
<keyword id="KW-0788">Thiol protease</keyword>
<keyword id="KW-0833">Ubl conjugation pathway</keyword>
<keyword id="KW-0879">Wnt signaling pathway</keyword>
<keyword id="KW-0862">Zinc</keyword>
<keyword id="KW-0863">Zinc-finger</keyword>
<reference key="1">
    <citation type="submission" date="2007-07" db="EMBL/GenBank/DDBJ databases">
        <authorList>
            <consortium name="NIH - Mammalian Gene Collection (MGC) project"/>
        </authorList>
    </citation>
    <scope>NUCLEOTIDE SEQUENCE [LARGE SCALE MRNA]</scope>
    <source>
        <strain>Hereford</strain>
        <tissue>Fetal skin</tissue>
    </source>
</reference>
<reference evidence="8" key="2">
    <citation type="journal article" date="2015" name="Mol. Cell">
        <title>K29-selective ubiquitin binding domain reveals structural basis of specificity and heterotypic nature of K29 polyubiquitin.</title>
        <authorList>
            <person name="Kristariyanto Y.A."/>
            <person name="Abdul Rehman S.A."/>
            <person name="Campbell D.G."/>
            <person name="Morrice N.A."/>
            <person name="Johnson C."/>
            <person name="Toth R."/>
            <person name="Kulathu Y."/>
        </authorList>
    </citation>
    <scope>X-RAY CRYSTALLOGRAPHY (3.03 ANGSTROMS) OF 2-33 IN COMPLEX WITH ZINC AND UBIQUITIN</scope>
</reference>
<accession>A6QP16</accession>
<evidence type="ECO:0000250" key="1">
    <source>
        <dbReference type="UniProtKB" id="Q6GQQ9"/>
    </source>
</evidence>
<evidence type="ECO:0000250" key="2">
    <source>
        <dbReference type="UniProtKB" id="Q9UGI0"/>
    </source>
</evidence>
<evidence type="ECO:0000255" key="3">
    <source>
        <dbReference type="PROSITE-ProRule" id="PRU00139"/>
    </source>
</evidence>
<evidence type="ECO:0000255" key="4">
    <source>
        <dbReference type="PROSITE-ProRule" id="PRU00322"/>
    </source>
</evidence>
<evidence type="ECO:0000256" key="5">
    <source>
        <dbReference type="SAM" id="MobiDB-lite"/>
    </source>
</evidence>
<evidence type="ECO:0000269" key="6">
    <source>
    </source>
</evidence>
<evidence type="ECO:0000305" key="7"/>
<evidence type="ECO:0007744" key="8">
    <source>
        <dbReference type="PDB" id="4S1Z"/>
    </source>
</evidence>
<evidence type="ECO:0007829" key="9">
    <source>
        <dbReference type="PDB" id="4S1Z"/>
    </source>
</evidence>
<organism>
    <name type="scientific">Bos taurus</name>
    <name type="common">Bovine</name>
    <dbReference type="NCBI Taxonomy" id="9913"/>
    <lineage>
        <taxon>Eukaryota</taxon>
        <taxon>Metazoa</taxon>
        <taxon>Chordata</taxon>
        <taxon>Craniata</taxon>
        <taxon>Vertebrata</taxon>
        <taxon>Euteleostomi</taxon>
        <taxon>Mammalia</taxon>
        <taxon>Eutheria</taxon>
        <taxon>Laurasiatheria</taxon>
        <taxon>Artiodactyla</taxon>
        <taxon>Ruminantia</taxon>
        <taxon>Pecora</taxon>
        <taxon>Bovidae</taxon>
        <taxon>Bovinae</taxon>
        <taxon>Bos</taxon>
    </lineage>
</organism>